<protein>
    <recommendedName>
        <fullName>Methyl-coenzyme M reductase subunit beta</fullName>
        <ecNumber evidence="1">2.8.4.1</ecNumber>
    </recommendedName>
    <alternativeName>
        <fullName>Coenzyme-B sulfoethylthiotransferase beta</fullName>
    </alternativeName>
</protein>
<comment type="function">
    <text evidence="1">Component of the methyl-coenzyme M reductase (MCR) I that catalyzes the reductive cleavage of methyl-coenzyme M (CoM-S-CH3 or 2-(methylthio)ethanesulfonate) using coenzyme B (CoB or 7-mercaptoheptanoylthreonine phosphate) as reductant which results in the production of methane and the mixed heterodisulfide of CoB and CoM (CoM-S-S-CoB). This is the final step in methanogenesis.</text>
</comment>
<comment type="catalytic activity">
    <reaction evidence="1">
        <text>coenzyme B + methyl-coenzyme M = methane + coenzyme M-coenzyme B heterodisulfide</text>
        <dbReference type="Rhea" id="RHEA:12532"/>
        <dbReference type="ChEBI" id="CHEBI:16183"/>
        <dbReference type="ChEBI" id="CHEBI:58286"/>
        <dbReference type="ChEBI" id="CHEBI:58411"/>
        <dbReference type="ChEBI" id="CHEBI:58596"/>
        <dbReference type="EC" id="2.8.4.1"/>
    </reaction>
    <physiologicalReaction direction="left-to-right" evidence="1">
        <dbReference type="Rhea" id="RHEA:12533"/>
    </physiologicalReaction>
</comment>
<comment type="cofactor">
    <cofactor evidence="1">
        <name>coenzyme F430</name>
        <dbReference type="ChEBI" id="CHEBI:60540"/>
    </cofactor>
    <text evidence="1">Binds 2 coenzyme F430 non-covalently per MCR complex. Coenzyme F430 is a yellow nickel porphinoid. Methyl-coenzyme-M reductase is activated when the enzyme-bound coenzyme F430 is reduced to the Ni(I) oxidation state.</text>
</comment>
<comment type="pathway">
    <text evidence="1">One-carbon metabolism; methyl-coenzyme M reduction; methane from methyl-coenzyme M: step 1/1.</text>
</comment>
<comment type="subunit">
    <text evidence="1">MCR is a hexamer of two alpha, two beta, and two gamma chains, forming a dimer of heterotrimers.</text>
</comment>
<comment type="subcellular location">
    <subcellularLocation>
        <location evidence="1">Cytoplasm</location>
    </subcellularLocation>
</comment>
<comment type="similarity">
    <text evidence="2">Belongs to the methyl-coenzyme M reductase beta subunit family.</text>
</comment>
<name>MCRB_METVA</name>
<proteinExistence type="inferred from homology"/>
<gene>
    <name type="primary">mcrB</name>
</gene>
<reference key="1">
    <citation type="journal article" date="1987" name="Proc. Natl. Acad. Sci. U.S.A.">
        <title>Structure and expression of the genes, mcrBDCGA, which encode the subunits of component C of methyl coenzyme M reductase in Methanococcus vannielii.</title>
        <authorList>
            <person name="Cram D.S."/>
            <person name="Sherf B.A."/>
            <person name="Libby R.T."/>
            <person name="Mattaliano R.J."/>
            <person name="Ramachandran K.L."/>
            <person name="Reeve J.N."/>
        </authorList>
    </citation>
    <scope>NUCLEOTIDE SEQUENCE [GENOMIC DNA]</scope>
</reference>
<dbReference type="EC" id="2.8.4.1" evidence="1"/>
<dbReference type="EMBL" id="M16893">
    <property type="protein sequence ID" value="AAA72594.1"/>
    <property type="molecule type" value="Genomic_DNA"/>
</dbReference>
<dbReference type="PIR" id="A27793">
    <property type="entry name" value="A27793"/>
</dbReference>
<dbReference type="SMR" id="P07956"/>
<dbReference type="UniPathway" id="UPA00646">
    <property type="reaction ID" value="UER00699"/>
</dbReference>
<dbReference type="GO" id="GO:0005737">
    <property type="term" value="C:cytoplasm"/>
    <property type="evidence" value="ECO:0007669"/>
    <property type="project" value="UniProtKB-SubCell"/>
</dbReference>
<dbReference type="GO" id="GO:0050524">
    <property type="term" value="F:coenzyme-B sulfoethylthiotransferase activity"/>
    <property type="evidence" value="ECO:0007669"/>
    <property type="project" value="UniProtKB-EC"/>
</dbReference>
<dbReference type="GO" id="GO:0015948">
    <property type="term" value="P:methanogenesis"/>
    <property type="evidence" value="ECO:0007669"/>
    <property type="project" value="UniProtKB-KW"/>
</dbReference>
<dbReference type="Gene3D" id="3.30.70.470">
    <property type="match status" value="1"/>
</dbReference>
<dbReference type="Gene3D" id="1.20.840.10">
    <property type="entry name" value="Methyl-coenzyme M reductase, alpha/beta subunit, C-terminal"/>
    <property type="match status" value="1"/>
</dbReference>
<dbReference type="InterPro" id="IPR008924">
    <property type="entry name" value="Me_CoM_Rdtase_asu/bsu_C"/>
</dbReference>
<dbReference type="InterPro" id="IPR015823">
    <property type="entry name" value="Me_CoM_Rdtase_asu_N_sub2"/>
</dbReference>
<dbReference type="InterPro" id="IPR003179">
    <property type="entry name" value="Me_CoM_Rdtase_bsu"/>
</dbReference>
<dbReference type="InterPro" id="IPR022679">
    <property type="entry name" value="Me_CoM_Rdtase_bsu_C"/>
</dbReference>
<dbReference type="InterPro" id="IPR022680">
    <property type="entry name" value="Me_CoM_Rdtase_bsu_N"/>
</dbReference>
<dbReference type="InterPro" id="IPR009024">
    <property type="entry name" value="Me_CoM_Rdtase_Fd-like_fold"/>
</dbReference>
<dbReference type="NCBIfam" id="TIGR03257">
    <property type="entry name" value="met_CoM_red_bet"/>
    <property type="match status" value="1"/>
</dbReference>
<dbReference type="Pfam" id="PF02241">
    <property type="entry name" value="MCR_beta"/>
    <property type="match status" value="1"/>
</dbReference>
<dbReference type="Pfam" id="PF02783">
    <property type="entry name" value="MCR_beta_N"/>
    <property type="match status" value="1"/>
</dbReference>
<dbReference type="PIRSF" id="PIRSF000263">
    <property type="entry name" value="Meth_CoM_rd_beta"/>
    <property type="match status" value="1"/>
</dbReference>
<dbReference type="SUPFAM" id="SSF48081">
    <property type="entry name" value="Methyl-coenzyme M reductase alpha and beta chain C-terminal domain"/>
    <property type="match status" value="1"/>
</dbReference>
<dbReference type="SUPFAM" id="SSF55088">
    <property type="entry name" value="Methyl-coenzyme M reductase subunits"/>
    <property type="match status" value="1"/>
</dbReference>
<accession>P07956</accession>
<organism>
    <name type="scientific">Methanococcus vannielii</name>
    <dbReference type="NCBI Taxonomy" id="2187"/>
    <lineage>
        <taxon>Archaea</taxon>
        <taxon>Methanobacteriati</taxon>
        <taxon>Methanobacteriota</taxon>
        <taxon>Methanomada group</taxon>
        <taxon>Methanococci</taxon>
        <taxon>Methanococcales</taxon>
        <taxon>Methanococcaceae</taxon>
        <taxon>Methanococcus</taxon>
    </lineage>
</organism>
<sequence length="443" mass="46954">MVKYEDKISLYDAKGNLVAENVPLEAISPLYNPTIKSMLKNIKRTVAVNLADIENTLATGSIGGKGCKVPGRTLDLSVVSNAQAIADEVEKILKVSKDDDTAIKLINGGKQMAVQVPSERLEVAAEYSVSMLATAMALKEAIIKTFNVDMFEGSTVHASIMGNYPQVMDYAGGNIASLLGAPSNLEGLGYALRNIPVNHAVATTKKNMMNAIAFSSVMEQTATFEMGDAIGSFERQHLLGLAYQGLNADNLVIEFIKANGKGTVGTVVQSVVERALADGVIVVDKTMGSGFNMYKPADVNKWNAYAAAGLVAAAAVSCGAARAAQNIASVILYYNDILEYETGLPGVDYGRSMGTAVGFSFFSHSIYGGGGPGIFNGNHVVTRHSKGFAIPPVCAAMCADAGTQMFSPEHTSALVGAVYSAFDEFREPMKYVIERALNIKDKL</sequence>
<keyword id="KW-0963">Cytoplasm</keyword>
<keyword id="KW-0484">Methanogenesis</keyword>
<keyword id="KW-0808">Transferase</keyword>
<feature type="chain" id="PRO_0000147471" description="Methyl-coenzyme M reductase subunit beta">
    <location>
        <begin position="1"/>
        <end position="443"/>
    </location>
</feature>
<feature type="binding site" evidence="1">
    <location>
        <position position="367"/>
    </location>
    <ligand>
        <name>coenzyme M</name>
        <dbReference type="ChEBI" id="CHEBI:58319"/>
    </ligand>
</feature>
<feature type="binding site" evidence="1">
    <location>
        <position position="369"/>
    </location>
    <ligand>
        <name>coenzyme B</name>
        <dbReference type="ChEBI" id="CHEBI:58596"/>
    </ligand>
</feature>
<evidence type="ECO:0000250" key="1">
    <source>
        <dbReference type="UniProtKB" id="P11560"/>
    </source>
</evidence>
<evidence type="ECO:0000305" key="2"/>